<accession>B0KUY1</accession>
<name>UPPP_PSEPG</name>
<reference key="1">
    <citation type="submission" date="2008-01" db="EMBL/GenBank/DDBJ databases">
        <title>Complete sequence of Pseudomonas putida GB-1.</title>
        <authorList>
            <consortium name="US DOE Joint Genome Institute"/>
            <person name="Copeland A."/>
            <person name="Lucas S."/>
            <person name="Lapidus A."/>
            <person name="Barry K."/>
            <person name="Glavina del Rio T."/>
            <person name="Dalin E."/>
            <person name="Tice H."/>
            <person name="Pitluck S."/>
            <person name="Bruce D."/>
            <person name="Goodwin L."/>
            <person name="Chertkov O."/>
            <person name="Brettin T."/>
            <person name="Detter J.C."/>
            <person name="Han C."/>
            <person name="Kuske C.R."/>
            <person name="Schmutz J."/>
            <person name="Larimer F."/>
            <person name="Land M."/>
            <person name="Hauser L."/>
            <person name="Kyrpides N."/>
            <person name="Kim E."/>
            <person name="McCarthy J.K."/>
            <person name="Richardson P."/>
        </authorList>
    </citation>
    <scope>NUCLEOTIDE SEQUENCE [LARGE SCALE GENOMIC DNA]</scope>
    <source>
        <strain>GB-1</strain>
    </source>
</reference>
<comment type="function">
    <text evidence="1">Catalyzes the dephosphorylation of undecaprenyl diphosphate (UPP). Confers resistance to bacitracin.</text>
</comment>
<comment type="catalytic activity">
    <reaction evidence="1">
        <text>di-trans,octa-cis-undecaprenyl diphosphate + H2O = di-trans,octa-cis-undecaprenyl phosphate + phosphate + H(+)</text>
        <dbReference type="Rhea" id="RHEA:28094"/>
        <dbReference type="ChEBI" id="CHEBI:15377"/>
        <dbReference type="ChEBI" id="CHEBI:15378"/>
        <dbReference type="ChEBI" id="CHEBI:43474"/>
        <dbReference type="ChEBI" id="CHEBI:58405"/>
        <dbReference type="ChEBI" id="CHEBI:60392"/>
        <dbReference type="EC" id="3.6.1.27"/>
    </reaction>
</comment>
<comment type="subcellular location">
    <subcellularLocation>
        <location evidence="1">Cell inner membrane</location>
        <topology evidence="1">Multi-pass membrane protein</topology>
    </subcellularLocation>
</comment>
<comment type="miscellaneous">
    <text>Bacitracin is thought to be involved in the inhibition of peptidoglycan synthesis by sequestering undecaprenyl diphosphate, thereby reducing the pool of lipid carrier available.</text>
</comment>
<comment type="similarity">
    <text evidence="1">Belongs to the UppP family.</text>
</comment>
<proteinExistence type="inferred from homology"/>
<dbReference type="EC" id="3.6.1.27" evidence="1"/>
<dbReference type="EMBL" id="CP000926">
    <property type="protein sequence ID" value="ABY98813.1"/>
    <property type="molecule type" value="Genomic_DNA"/>
</dbReference>
<dbReference type="RefSeq" id="WP_012272547.1">
    <property type="nucleotide sequence ID" value="NC_010322.1"/>
</dbReference>
<dbReference type="SMR" id="B0KUY1"/>
<dbReference type="KEGG" id="ppg:PputGB1_2919"/>
<dbReference type="eggNOG" id="COG1968">
    <property type="taxonomic scope" value="Bacteria"/>
</dbReference>
<dbReference type="HOGENOM" id="CLU_060296_2_0_6"/>
<dbReference type="Proteomes" id="UP000002157">
    <property type="component" value="Chromosome"/>
</dbReference>
<dbReference type="GO" id="GO:0005886">
    <property type="term" value="C:plasma membrane"/>
    <property type="evidence" value="ECO:0007669"/>
    <property type="project" value="UniProtKB-SubCell"/>
</dbReference>
<dbReference type="GO" id="GO:0050380">
    <property type="term" value="F:undecaprenyl-diphosphatase activity"/>
    <property type="evidence" value="ECO:0007669"/>
    <property type="project" value="UniProtKB-UniRule"/>
</dbReference>
<dbReference type="GO" id="GO:0071555">
    <property type="term" value="P:cell wall organization"/>
    <property type="evidence" value="ECO:0007669"/>
    <property type="project" value="UniProtKB-KW"/>
</dbReference>
<dbReference type="GO" id="GO:0009252">
    <property type="term" value="P:peptidoglycan biosynthetic process"/>
    <property type="evidence" value="ECO:0007669"/>
    <property type="project" value="UniProtKB-KW"/>
</dbReference>
<dbReference type="GO" id="GO:0008360">
    <property type="term" value="P:regulation of cell shape"/>
    <property type="evidence" value="ECO:0007669"/>
    <property type="project" value="UniProtKB-KW"/>
</dbReference>
<dbReference type="GO" id="GO:0046677">
    <property type="term" value="P:response to antibiotic"/>
    <property type="evidence" value="ECO:0007669"/>
    <property type="project" value="UniProtKB-UniRule"/>
</dbReference>
<dbReference type="HAMAP" id="MF_01006">
    <property type="entry name" value="Undec_diphosphatase"/>
    <property type="match status" value="1"/>
</dbReference>
<dbReference type="InterPro" id="IPR003824">
    <property type="entry name" value="UppP"/>
</dbReference>
<dbReference type="NCBIfam" id="NF001389">
    <property type="entry name" value="PRK00281.1-2"/>
    <property type="match status" value="1"/>
</dbReference>
<dbReference type="NCBIfam" id="NF001390">
    <property type="entry name" value="PRK00281.1-4"/>
    <property type="match status" value="1"/>
</dbReference>
<dbReference type="NCBIfam" id="TIGR00753">
    <property type="entry name" value="undec_PP_bacA"/>
    <property type="match status" value="1"/>
</dbReference>
<dbReference type="PANTHER" id="PTHR30622">
    <property type="entry name" value="UNDECAPRENYL-DIPHOSPHATASE"/>
    <property type="match status" value="1"/>
</dbReference>
<dbReference type="PANTHER" id="PTHR30622:SF3">
    <property type="entry name" value="UNDECAPRENYL-DIPHOSPHATASE"/>
    <property type="match status" value="1"/>
</dbReference>
<dbReference type="Pfam" id="PF02673">
    <property type="entry name" value="BacA"/>
    <property type="match status" value="1"/>
</dbReference>
<protein>
    <recommendedName>
        <fullName evidence="1">Undecaprenyl-diphosphatase</fullName>
        <ecNumber evidence="1">3.6.1.27</ecNumber>
    </recommendedName>
    <alternativeName>
        <fullName evidence="1">Bacitracin resistance protein</fullName>
    </alternativeName>
    <alternativeName>
        <fullName evidence="1">Undecaprenyl pyrophosphate phosphatase</fullName>
    </alternativeName>
</protein>
<organism>
    <name type="scientific">Pseudomonas putida (strain GB-1)</name>
    <dbReference type="NCBI Taxonomy" id="76869"/>
    <lineage>
        <taxon>Bacteria</taxon>
        <taxon>Pseudomonadati</taxon>
        <taxon>Pseudomonadota</taxon>
        <taxon>Gammaproteobacteria</taxon>
        <taxon>Pseudomonadales</taxon>
        <taxon>Pseudomonadaceae</taxon>
        <taxon>Pseudomonas</taxon>
    </lineage>
</organism>
<keyword id="KW-0046">Antibiotic resistance</keyword>
<keyword id="KW-0997">Cell inner membrane</keyword>
<keyword id="KW-1003">Cell membrane</keyword>
<keyword id="KW-0133">Cell shape</keyword>
<keyword id="KW-0961">Cell wall biogenesis/degradation</keyword>
<keyword id="KW-0378">Hydrolase</keyword>
<keyword id="KW-0472">Membrane</keyword>
<keyword id="KW-0573">Peptidoglycan synthesis</keyword>
<keyword id="KW-0812">Transmembrane</keyword>
<keyword id="KW-1133">Transmembrane helix</keyword>
<sequence length="276" mass="30517">MDFWTAFQAIILGVVEGLTEFLPISSTGHQIIVADLIGFGGERAMAFNIIIQLAAILAVVWEFRGKILEVVFGLTSQPKARRFTGNLLLAFMPAVVLGVLFADLIHEYLFNPITVATALVVGGVIMLWAERREHRVQVDHVDDMRWSHALKIGFVQCLAMIPGTSRSGSTIIGGLLFGLSRKAATEFSFFLAMPTMVGAAVYSGYKYRDLFQPADLPVFAIGFVTSFIFAMIAVRALLKFIANHSYAAFAWYRIVFGLLILATWQFGWVDWSTAHG</sequence>
<gene>
    <name evidence="1" type="primary">uppP</name>
    <name type="ordered locus">PputGB1_2919</name>
</gene>
<feature type="chain" id="PRO_1000083985" description="Undecaprenyl-diphosphatase">
    <location>
        <begin position="1"/>
        <end position="276"/>
    </location>
</feature>
<feature type="transmembrane region" description="Helical" evidence="1">
    <location>
        <begin position="43"/>
        <end position="63"/>
    </location>
</feature>
<feature type="transmembrane region" description="Helical" evidence="1">
    <location>
        <begin position="85"/>
        <end position="105"/>
    </location>
</feature>
<feature type="transmembrane region" description="Helical" evidence="1">
    <location>
        <begin position="109"/>
        <end position="129"/>
    </location>
</feature>
<feature type="transmembrane region" description="Helical" evidence="1">
    <location>
        <begin position="183"/>
        <end position="203"/>
    </location>
</feature>
<feature type="transmembrane region" description="Helical" evidence="1">
    <location>
        <begin position="214"/>
        <end position="234"/>
    </location>
</feature>
<feature type="transmembrane region" description="Helical" evidence="1">
    <location>
        <begin position="249"/>
        <end position="269"/>
    </location>
</feature>
<evidence type="ECO:0000255" key="1">
    <source>
        <dbReference type="HAMAP-Rule" id="MF_01006"/>
    </source>
</evidence>